<accession>Q864Z3</accession>
<accession>A7E342</accession>
<reference key="1">
    <citation type="submission" date="2003-03" db="EMBL/GenBank/DDBJ databases">
        <title>Cloning of the organic anion transporter 1 from bovine kidney.</title>
        <authorList>
            <person name="Geyer J."/>
            <person name="Petzinger E."/>
        </authorList>
    </citation>
    <scope>NUCLEOTIDE SEQUENCE [MRNA] (ISOFORM 1)</scope>
    <source>
        <tissue>Kidney</tissue>
    </source>
</reference>
<reference key="2">
    <citation type="journal article" date="2005" name="BMC Genomics">
        <title>Characterization of 954 bovine full-CDS cDNA sequences.</title>
        <authorList>
            <person name="Harhay G.P."/>
            <person name="Sonstegard T.S."/>
            <person name="Keele J.W."/>
            <person name="Heaton M.P."/>
            <person name="Clawson M.L."/>
            <person name="Snelling W.M."/>
            <person name="Wiedmann R.T."/>
            <person name="Van Tassell C.P."/>
            <person name="Smith T.P.L."/>
        </authorList>
    </citation>
    <scope>NUCLEOTIDE SEQUENCE [LARGE SCALE MRNA] (ISOFORM 1)</scope>
</reference>
<reference key="3">
    <citation type="submission" date="2007-08" db="EMBL/GenBank/DDBJ databases">
        <authorList>
            <consortium name="NIH - Mammalian Gene Collection (MGC) project"/>
        </authorList>
    </citation>
    <scope>NUCLEOTIDE SEQUENCE [LARGE SCALE MRNA] (ISOFORM 2)</scope>
    <source>
        <strain>Hereford</strain>
        <tissue>Kidney</tissue>
    </source>
</reference>
<organism>
    <name type="scientific">Bos taurus</name>
    <name type="common">Bovine</name>
    <dbReference type="NCBI Taxonomy" id="9913"/>
    <lineage>
        <taxon>Eukaryota</taxon>
        <taxon>Metazoa</taxon>
        <taxon>Chordata</taxon>
        <taxon>Craniata</taxon>
        <taxon>Vertebrata</taxon>
        <taxon>Euteleostomi</taxon>
        <taxon>Mammalia</taxon>
        <taxon>Eutheria</taxon>
        <taxon>Laurasiatheria</taxon>
        <taxon>Artiodactyla</taxon>
        <taxon>Ruminantia</taxon>
        <taxon>Pecora</taxon>
        <taxon>Bovidae</taxon>
        <taxon>Bovinae</taxon>
        <taxon>Bos</taxon>
    </lineage>
</organism>
<protein>
    <recommendedName>
        <fullName evidence="2">Solute carrier family 22 member 6</fullName>
    </recommendedName>
    <alternativeName>
        <fullName evidence="2">Organic anion transporter 1</fullName>
    </alternativeName>
    <alternativeName>
        <fullName evidence="2">Renal organic anion transporter 1</fullName>
        <shortName>ROAT1</shortName>
    </alternativeName>
</protein>
<comment type="function">
    <text evidence="1 2">Secondary active transporter that functions as a Na(+)-independent organic anion (OA)/dicarboxylate antiporter where the uptake of one molecule of OA into the cell is coupled with an efflux of one molecule of intracellular dicarboxylate such as 2-oxoglutarate or glutarate. Mediates the uptake of OA across the basolateral side of proximal tubule epithelial cells, thereby contributing to the renal elimination of endogenous OA from the systemic circulation into the urine. Functions as a biopterin transporters involved in the uptake and the secretion of coenzymes tetrahydrobiopterin (BH4), dihydrobiopterin (BH2) and sepiapterin to urine, thereby determining baseline levels of blood biopterins. Transports prostaglandin E2 (PGE2) and prostaglandin F2-alpha (PGF2-alpha) and may contribute to their renal excretion (By similarity). Also mediates the uptake of cyclic nucleotides such as cAMP and cGMP (By similarity). Involved in the transport of neuroactive tryptophan metabolites kynurenate (KYNA) and xanthurenate (XA) and may contribute to their secretion from the brain. May transport glutamate. Also involved in the disposition of uremic toxins and potentially toxic xenobiotics by the renal organic anion secretory pathway, helping reduce their undesired toxicological effects on the body. Uremic toxins include the indoxyl sulfate (IS), hippurate/N-benzoylglycine (HA), indole acetate (IA), 3-carboxy-4- methyl-5-propyl-2-furanpropionate (CMPF) and urate. Xenobiotics include the mycotoxin ochratoxin (OTA). May also contribute to the transport of organic compounds in testes across the blood-testis-barrier (By similarity).</text>
</comment>
<comment type="catalytic activity">
    <reaction evidence="2">
        <text>(6R)-L-erythro-5,6,7,8-tetrahydrobiopterin(out) + a dicarboxylate(in) = (6R)-L-erythro-5,6,7,8-tetrahydrobiopterin(in) + a dicarboxylate(out)</text>
        <dbReference type="Rhea" id="RHEA:76071"/>
        <dbReference type="ChEBI" id="CHEBI:28965"/>
        <dbReference type="ChEBI" id="CHEBI:59560"/>
    </reaction>
</comment>
<comment type="catalytic activity">
    <reaction evidence="2">
        <text>L-erythro-7,8-dihydrobiopterin(out) + a dicarboxylate(in) = L-erythro-7,8-dihydrobiopterin(in) + a dicarboxylate(out)</text>
        <dbReference type="Rhea" id="RHEA:76075"/>
        <dbReference type="ChEBI" id="CHEBI:28965"/>
        <dbReference type="ChEBI" id="CHEBI:43029"/>
    </reaction>
</comment>
<comment type="catalytic activity">
    <reaction evidence="2">
        <text>L-sepiapterin(out) + a dicarboxylate(in) = L-sepiapterin(in) + a dicarboxylate(out)</text>
        <dbReference type="Rhea" id="RHEA:76079"/>
        <dbReference type="ChEBI" id="CHEBI:28965"/>
        <dbReference type="ChEBI" id="CHEBI:194527"/>
    </reaction>
</comment>
<comment type="catalytic activity">
    <reaction evidence="2">
        <text>prostaglandin F2alpha(out) + a dicarboxylate(in) = prostaglandin F2alpha(in) + a dicarboxylate(out)</text>
        <dbReference type="Rhea" id="RHEA:76119"/>
        <dbReference type="ChEBI" id="CHEBI:28965"/>
        <dbReference type="ChEBI" id="CHEBI:57404"/>
    </reaction>
</comment>
<comment type="catalytic activity">
    <reaction evidence="2">
        <text>prostaglandin E2(out) + a dicarboxylate(in) = prostaglandin E2(in) + a dicarboxylate(out)</text>
        <dbReference type="Rhea" id="RHEA:76123"/>
        <dbReference type="ChEBI" id="CHEBI:28965"/>
        <dbReference type="ChEBI" id="CHEBI:606564"/>
    </reaction>
</comment>
<comment type="catalytic activity">
    <reaction evidence="1">
        <text>3',5'-cyclic AMP(out) + a dicarboxylate(in) = 3',5'-cyclic AMP(in) + a dicarboxylate(out)</text>
        <dbReference type="Rhea" id="RHEA:76127"/>
        <dbReference type="ChEBI" id="CHEBI:28965"/>
        <dbReference type="ChEBI" id="CHEBI:58165"/>
    </reaction>
</comment>
<comment type="catalytic activity">
    <reaction evidence="1">
        <text>3',5'-cyclic GMP(out) + a dicarboxylate(in) = 3',5'-cyclic GMP(in) + a dicarboxylate(out)</text>
        <dbReference type="Rhea" id="RHEA:76131"/>
        <dbReference type="ChEBI" id="CHEBI:28965"/>
        <dbReference type="ChEBI" id="CHEBI:57746"/>
    </reaction>
</comment>
<comment type="catalytic activity">
    <reaction evidence="1">
        <text>urate(out) + a dicarboxylate(in) = urate(in) + a dicarboxylate(out)</text>
        <dbReference type="Rhea" id="RHEA:76135"/>
        <dbReference type="ChEBI" id="CHEBI:17775"/>
        <dbReference type="ChEBI" id="CHEBI:28965"/>
    </reaction>
</comment>
<comment type="catalytic activity">
    <reaction evidence="2">
        <text>kynurenate(out) + glutarate(in) = kynurenate(in) + glutarate(out)</text>
        <dbReference type="Rhea" id="RHEA:75999"/>
        <dbReference type="ChEBI" id="CHEBI:30921"/>
        <dbReference type="ChEBI" id="CHEBI:58454"/>
    </reaction>
</comment>
<comment type="catalytic activity">
    <reaction evidence="2">
        <text>(indol-3-yl)acetate(out) + a dicarboxylate(in) = (indol-3-yl)acetate(in) + a dicarboxylate(out)</text>
        <dbReference type="Rhea" id="RHEA:75983"/>
        <dbReference type="ChEBI" id="CHEBI:28965"/>
        <dbReference type="ChEBI" id="CHEBI:30854"/>
    </reaction>
</comment>
<comment type="catalytic activity">
    <reaction evidence="2">
        <text>indoxyl sulfate(out) + a dicarboxylate(in) = indoxyl sulfate(in) + a dicarboxylate(out)</text>
        <dbReference type="Rhea" id="RHEA:75987"/>
        <dbReference type="ChEBI" id="CHEBI:28965"/>
        <dbReference type="ChEBI" id="CHEBI:144643"/>
    </reaction>
</comment>
<comment type="catalytic activity">
    <reaction evidence="2">
        <text>N-benzoylglycine(out) + a dicarboxylate(in) = N-benzoylglycine(in) + a dicarboxylate(out)</text>
        <dbReference type="Rhea" id="RHEA:75991"/>
        <dbReference type="ChEBI" id="CHEBI:28965"/>
        <dbReference type="ChEBI" id="CHEBI:606565"/>
    </reaction>
</comment>
<comment type="catalytic activity">
    <reaction evidence="2">
        <text>3-carboxy-4-methyl-5-propyl-2-furanpropanoate(out) + a dicarboxylate(in) = 3-carboxy-4-methyl-5-propyl-2-furanpropanoate(in) + a dicarboxylate(out)</text>
        <dbReference type="Rhea" id="RHEA:75995"/>
        <dbReference type="ChEBI" id="CHEBI:28965"/>
        <dbReference type="ChEBI" id="CHEBI:194524"/>
    </reaction>
</comment>
<comment type="subcellular location">
    <subcellularLocation>
        <location evidence="2">Basolateral cell membrane</location>
        <topology evidence="7">Multi-pass membrane protein</topology>
    </subcellularLocation>
    <subcellularLocation>
        <location evidence="2">Basal cell membrane</location>
        <topology evidence="7">Multi-pass membrane protein</topology>
    </subcellularLocation>
</comment>
<comment type="alternative products">
    <event type="alternative splicing"/>
    <isoform>
        <id>Q864Z3-1</id>
        <name>1</name>
        <sequence type="displayed"/>
    </isoform>
    <isoform>
        <id>Q864Z3-2</id>
        <name>2</name>
        <sequence type="described" ref="VSP_032167"/>
    </isoform>
</comment>
<comment type="domain">
    <text evidence="3">Multiple cysteine residues are necessary for proper targeting to the plasma membrane.</text>
</comment>
<comment type="PTM">
    <text evidence="2">Glycosylated. Glycosylation is necessary for proper targeting of the transporter to the plasma membrane.</text>
</comment>
<comment type="similarity">
    <text evidence="7">Belongs to the major facilitator (TC 2.A.1) superfamily. Organic cation transporter (TC 2.A.1.19) family.</text>
</comment>
<gene>
    <name evidence="2" type="primary">SLC22A6</name>
    <name type="synonym">OAT1</name>
</gene>
<evidence type="ECO:0000250" key="1">
    <source>
        <dbReference type="UniProtKB" id="O35956"/>
    </source>
</evidence>
<evidence type="ECO:0000250" key="2">
    <source>
        <dbReference type="UniProtKB" id="Q4U2R8"/>
    </source>
</evidence>
<evidence type="ECO:0000250" key="3">
    <source>
        <dbReference type="UniProtKB" id="Q8VC69"/>
    </source>
</evidence>
<evidence type="ECO:0000255" key="4"/>
<evidence type="ECO:0000256" key="5">
    <source>
        <dbReference type="SAM" id="MobiDB-lite"/>
    </source>
</evidence>
<evidence type="ECO:0000303" key="6">
    <source ref="3"/>
</evidence>
<evidence type="ECO:0000305" key="7"/>
<sequence>MAFNDLLLQLGGVGRFQKIQVTLVILPLILLASHNTLQNFTAAIPTHHCRPPADTNLSEDGDLEAWLPRDGQGRPESCLLFTSPQRGPPFPNGTETNGTGATEPCPHGWIYDNSTFPSTIVTEWDLVCSHRALRQLAQSLYMMGVLLGAMTFGCLADRLGRRKVLIFNYLQTAVSGTCAAFAPNFPAYCAFRFLSGMSTAGVVLNCMTLNVEWMPIHTRAYVGTLTGYVYSLGQFLLAGMAYAVPHWRYLQLLVSAPFFAFFIYSWFFIESARWYASSGRLDLTLRNLQRVAWINGKQEEGANLSMEALQASLKKELTTGKSQASALELIRCPALRRLFLCLSMLWFATSFAYYGLVMDLQGFGVSIYLIQVIFGAVDLPAKLVSFLVINNVGRRPAQMASLLLAGICILINGVVPKDKSIVRTSLAVLGKGCLASSFNCIFLYTGEVYPTMIRQTGLGMGSTLARVGSIVSPLVSMTAELYPSVPLFIYGAVPVAASAAIALLPETLGQPLPDTVQDVENRRRGKTRKQQEELQKQMVPLQASAQVKN</sequence>
<dbReference type="EMBL" id="AJ549816">
    <property type="protein sequence ID" value="CAD71145.1"/>
    <property type="molecule type" value="mRNA"/>
</dbReference>
<dbReference type="EMBL" id="BT021760">
    <property type="protein sequence ID" value="AAX46607.1"/>
    <property type="molecule type" value="mRNA"/>
</dbReference>
<dbReference type="EMBL" id="BC151704">
    <property type="protein sequence ID" value="AAI51705.1"/>
    <property type="molecule type" value="mRNA"/>
</dbReference>
<dbReference type="RefSeq" id="NP_001001143.1">
    <property type="nucleotide sequence ID" value="NM_001001143.2"/>
</dbReference>
<dbReference type="SMR" id="Q864Z3"/>
<dbReference type="FunCoup" id="Q864Z3">
    <property type="interactions" value="65"/>
</dbReference>
<dbReference type="STRING" id="9913.ENSBTAP00000018132"/>
<dbReference type="GlyCosmos" id="Q864Z3">
    <property type="glycosylation" value="3 sites, No reported glycans"/>
</dbReference>
<dbReference type="GlyGen" id="Q864Z3">
    <property type="glycosylation" value="3 sites"/>
</dbReference>
<dbReference type="PaxDb" id="9913-ENSBTAP00000018132"/>
<dbReference type="GeneID" id="407180"/>
<dbReference type="KEGG" id="bta:407180"/>
<dbReference type="CTD" id="9356"/>
<dbReference type="eggNOG" id="KOG0255">
    <property type="taxonomic scope" value="Eukaryota"/>
</dbReference>
<dbReference type="InParanoid" id="Q864Z3"/>
<dbReference type="OrthoDB" id="2544694at2759"/>
<dbReference type="Proteomes" id="UP000009136">
    <property type="component" value="Unplaced"/>
</dbReference>
<dbReference type="GO" id="GO:0009925">
    <property type="term" value="C:basal plasma membrane"/>
    <property type="evidence" value="ECO:0000250"/>
    <property type="project" value="UniProtKB"/>
</dbReference>
<dbReference type="GO" id="GO:0016323">
    <property type="term" value="C:basolateral plasma membrane"/>
    <property type="evidence" value="ECO:0000250"/>
    <property type="project" value="UniProtKB"/>
</dbReference>
<dbReference type="GO" id="GO:0005886">
    <property type="term" value="C:plasma membrane"/>
    <property type="evidence" value="ECO:0000250"/>
    <property type="project" value="UniProtKB"/>
</dbReference>
<dbReference type="GO" id="GO:0015139">
    <property type="term" value="F:alpha-ketoglutarate transmembrane transporter activity"/>
    <property type="evidence" value="ECO:0000250"/>
    <property type="project" value="UniProtKB"/>
</dbReference>
<dbReference type="GO" id="GO:0015297">
    <property type="term" value="F:antiporter activity"/>
    <property type="evidence" value="ECO:0000250"/>
    <property type="project" value="UniProtKB"/>
</dbReference>
<dbReference type="GO" id="GO:0008514">
    <property type="term" value="F:organic anion transmembrane transporter activity"/>
    <property type="evidence" value="ECO:0000250"/>
    <property type="project" value="UniProtKB"/>
</dbReference>
<dbReference type="GO" id="GO:0015132">
    <property type="term" value="F:prostaglandin transmembrane transporter activity"/>
    <property type="evidence" value="ECO:0000250"/>
    <property type="project" value="UniProtKB"/>
</dbReference>
<dbReference type="GO" id="GO:0015347">
    <property type="term" value="F:sodium-independent organic anion transmembrane transporter activity"/>
    <property type="evidence" value="ECO:0000250"/>
    <property type="project" value="UniProtKB"/>
</dbReference>
<dbReference type="GO" id="GO:0005452">
    <property type="term" value="F:solute:inorganic anion antiporter activity"/>
    <property type="evidence" value="ECO:0000250"/>
    <property type="project" value="UniProtKB"/>
</dbReference>
<dbReference type="GO" id="GO:0022857">
    <property type="term" value="F:transmembrane transporter activity"/>
    <property type="evidence" value="ECO:0000250"/>
    <property type="project" value="UniProtKB"/>
</dbReference>
<dbReference type="GO" id="GO:0042910">
    <property type="term" value="F:xenobiotic transmembrane transporter activity"/>
    <property type="evidence" value="ECO:0000250"/>
    <property type="project" value="UniProtKB"/>
</dbReference>
<dbReference type="GO" id="GO:0015742">
    <property type="term" value="P:alpha-ketoglutarate transport"/>
    <property type="evidence" value="ECO:0000250"/>
    <property type="project" value="UniProtKB"/>
</dbReference>
<dbReference type="GO" id="GO:0015711">
    <property type="term" value="P:organic anion transport"/>
    <property type="evidence" value="ECO:0000250"/>
    <property type="project" value="UniProtKB"/>
</dbReference>
<dbReference type="GO" id="GO:0015732">
    <property type="term" value="P:prostaglandin transport"/>
    <property type="evidence" value="ECO:0000250"/>
    <property type="project" value="UniProtKB"/>
</dbReference>
<dbReference type="GO" id="GO:0097254">
    <property type="term" value="P:renal tubular secretion"/>
    <property type="evidence" value="ECO:0000250"/>
    <property type="project" value="UniProtKB"/>
</dbReference>
<dbReference type="CDD" id="cd17446">
    <property type="entry name" value="MFS_SLC22A6_OAT1_like"/>
    <property type="match status" value="1"/>
</dbReference>
<dbReference type="FunFam" id="1.20.1250.20:FF:000023">
    <property type="entry name" value="Solute carrier family 22 member 6"/>
    <property type="match status" value="1"/>
</dbReference>
<dbReference type="Gene3D" id="1.20.1250.20">
    <property type="entry name" value="MFS general substrate transporter like domains"/>
    <property type="match status" value="1"/>
</dbReference>
<dbReference type="InterPro" id="IPR020846">
    <property type="entry name" value="MFS_dom"/>
</dbReference>
<dbReference type="InterPro" id="IPR005828">
    <property type="entry name" value="MFS_sugar_transport-like"/>
</dbReference>
<dbReference type="InterPro" id="IPR036259">
    <property type="entry name" value="MFS_trans_sf"/>
</dbReference>
<dbReference type="InterPro" id="IPR004749">
    <property type="entry name" value="Orgcat_transp/SVOP"/>
</dbReference>
<dbReference type="NCBIfam" id="TIGR00898">
    <property type="entry name" value="2A0119"/>
    <property type="match status" value="1"/>
</dbReference>
<dbReference type="PANTHER" id="PTHR24064">
    <property type="entry name" value="SOLUTE CARRIER FAMILY 22 MEMBER"/>
    <property type="match status" value="1"/>
</dbReference>
<dbReference type="Pfam" id="PF00083">
    <property type="entry name" value="Sugar_tr"/>
    <property type="match status" value="1"/>
</dbReference>
<dbReference type="SUPFAM" id="SSF103473">
    <property type="entry name" value="MFS general substrate transporter"/>
    <property type="match status" value="1"/>
</dbReference>
<dbReference type="PROSITE" id="PS50850">
    <property type="entry name" value="MFS"/>
    <property type="match status" value="1"/>
</dbReference>
<feature type="chain" id="PRO_0000324165" description="Solute carrier family 22 member 6">
    <location>
        <begin position="1"/>
        <end position="549"/>
    </location>
</feature>
<feature type="topological domain" description="Cytoplasmic" evidence="4">
    <location>
        <begin position="1"/>
        <end position="23"/>
    </location>
</feature>
<feature type="transmembrane region" description="Helical" evidence="4">
    <location>
        <begin position="24"/>
        <end position="44"/>
    </location>
</feature>
<feature type="topological domain" description="Extracellular" evidence="4">
    <location>
        <begin position="45"/>
        <end position="135"/>
    </location>
</feature>
<feature type="transmembrane region" description="Helical" evidence="4">
    <location>
        <begin position="136"/>
        <end position="156"/>
    </location>
</feature>
<feature type="topological domain" description="Cytoplasmic" evidence="4">
    <location>
        <begin position="157"/>
        <end position="164"/>
    </location>
</feature>
<feature type="transmembrane region" description="Helical" evidence="4">
    <location>
        <begin position="165"/>
        <end position="185"/>
    </location>
</feature>
<feature type="topological domain" description="Extracellular" evidence="4">
    <location>
        <begin position="186"/>
        <end position="195"/>
    </location>
</feature>
<feature type="transmembrane region" description="Helical" evidence="4">
    <location>
        <begin position="196"/>
        <end position="216"/>
    </location>
</feature>
<feature type="topological domain" description="Cytoplasmic" evidence="4">
    <location>
        <begin position="217"/>
        <end position="224"/>
    </location>
</feature>
<feature type="transmembrane region" description="Helical" evidence="4">
    <location>
        <begin position="225"/>
        <end position="245"/>
    </location>
</feature>
<feature type="topological domain" description="Extracellular" evidence="4">
    <location>
        <begin position="246"/>
        <end position="248"/>
    </location>
</feature>
<feature type="transmembrane region" description="Helical" evidence="4">
    <location>
        <begin position="249"/>
        <end position="269"/>
    </location>
</feature>
<feature type="topological domain" description="Cytoplasmic" evidence="4">
    <location>
        <begin position="270"/>
        <end position="337"/>
    </location>
</feature>
<feature type="transmembrane region" description="Helical" evidence="4">
    <location>
        <begin position="338"/>
        <end position="358"/>
    </location>
</feature>
<feature type="topological domain" description="Extracellular" evidence="4">
    <location>
        <begin position="359"/>
        <end position="368"/>
    </location>
</feature>
<feature type="transmembrane region" description="Helical" evidence="4">
    <location>
        <begin position="369"/>
        <end position="389"/>
    </location>
</feature>
<feature type="topological domain" description="Cytoplasmic" evidence="4">
    <location>
        <begin position="390"/>
        <end position="395"/>
    </location>
</feature>
<feature type="transmembrane region" description="Helical" evidence="4">
    <location>
        <begin position="396"/>
        <end position="416"/>
    </location>
</feature>
<feature type="topological domain" description="Extracellular" evidence="4">
    <location>
        <begin position="417"/>
        <end position="425"/>
    </location>
</feature>
<feature type="transmembrane region" description="Helical" evidence="4">
    <location>
        <begin position="426"/>
        <end position="446"/>
    </location>
</feature>
<feature type="topological domain" description="Cytoplasmic" evidence="4">
    <location>
        <begin position="447"/>
        <end position="456"/>
    </location>
</feature>
<feature type="transmembrane region" description="Helical" evidence="4">
    <location>
        <begin position="457"/>
        <end position="477"/>
    </location>
</feature>
<feature type="topological domain" description="Extracellular" evidence="4">
    <location>
        <begin position="478"/>
        <end position="484"/>
    </location>
</feature>
<feature type="transmembrane region" description="Helical" evidence="4">
    <location>
        <begin position="485"/>
        <end position="505"/>
    </location>
</feature>
<feature type="topological domain" description="Cytoplasmic" evidence="4">
    <location>
        <begin position="506"/>
        <end position="549"/>
    </location>
</feature>
<feature type="region of interest" description="Disordered" evidence="5">
    <location>
        <begin position="521"/>
        <end position="549"/>
    </location>
</feature>
<feature type="glycosylation site" description="N-linked (GlcNAc...) asparagine" evidence="4">
    <location>
        <position position="56"/>
    </location>
</feature>
<feature type="glycosylation site" description="N-linked (GlcNAc...) asparagine" evidence="4">
    <location>
        <position position="92"/>
    </location>
</feature>
<feature type="glycosylation site" description="N-linked (GlcNAc...) asparagine" evidence="4">
    <location>
        <position position="113"/>
    </location>
</feature>
<feature type="splice variant" id="VSP_032167" description="In isoform 2." evidence="6">
    <original>MAFNDLLLQLGGVGRFQKIQVTLVILPLILLASHNTLQNFTAAIPTHHCRPPADTNLSEDGDLEAWLPRDGQGRPESCLLFTSPQRGPPFPNGTETNGTGATEPCPHGWIYDNSTFPSTIVTEWDLVCSH</original>
    <variation>MGRGGPSPASSSPPPSGDRPFPMAQRPTAQGPQSPVPTAGSTTTAPSLPPSSL</variation>
    <location>
        <begin position="1"/>
        <end position="130"/>
    </location>
</feature>
<feature type="sequence conflict" description="In Ref. 1; CAD71145 and 2; AAX46607." evidence="7" ref="1 2">
    <original>R</original>
    <variation>Q</variation>
    <location>
        <position position="162"/>
    </location>
</feature>
<keyword id="KW-0025">Alternative splicing</keyword>
<keyword id="KW-1003">Cell membrane</keyword>
<keyword id="KW-0325">Glycoprotein</keyword>
<keyword id="KW-0472">Membrane</keyword>
<keyword id="KW-1185">Reference proteome</keyword>
<keyword id="KW-0812">Transmembrane</keyword>
<keyword id="KW-1133">Transmembrane helix</keyword>
<proteinExistence type="evidence at transcript level"/>
<name>S22A6_BOVIN</name>